<keyword id="KW-0963">Cytoplasm</keyword>
<keyword id="KW-0238">DNA-binding</keyword>
<keyword id="KW-0520">NAD</keyword>
<keyword id="KW-1185">Reference proteome</keyword>
<keyword id="KW-0678">Repressor</keyword>
<keyword id="KW-0804">Transcription</keyword>
<keyword id="KW-0805">Transcription regulation</keyword>
<protein>
    <recommendedName>
        <fullName evidence="1">Redox-sensing transcriptional repressor Rex</fullName>
    </recommendedName>
</protein>
<gene>
    <name evidence="1" type="primary">rex</name>
    <name type="ordered locus">TTE0543</name>
</gene>
<comment type="function">
    <text evidence="1">Modulates transcription in response to changes in cellular NADH/NAD(+) redox state.</text>
</comment>
<comment type="subunit">
    <text evidence="1">Homodimer.</text>
</comment>
<comment type="subcellular location">
    <subcellularLocation>
        <location evidence="1">Cytoplasm</location>
    </subcellularLocation>
</comment>
<comment type="similarity">
    <text evidence="1">Belongs to the transcriptional regulatory Rex family.</text>
</comment>
<proteinExistence type="inferred from homology"/>
<evidence type="ECO:0000255" key="1">
    <source>
        <dbReference type="HAMAP-Rule" id="MF_01131"/>
    </source>
</evidence>
<accession>Q8RC93</accession>
<organism>
    <name type="scientific">Caldanaerobacter subterraneus subsp. tengcongensis (strain DSM 15242 / JCM 11007 / NBRC 100824 / MB4)</name>
    <name type="common">Thermoanaerobacter tengcongensis</name>
    <dbReference type="NCBI Taxonomy" id="273068"/>
    <lineage>
        <taxon>Bacteria</taxon>
        <taxon>Bacillati</taxon>
        <taxon>Bacillota</taxon>
        <taxon>Clostridia</taxon>
        <taxon>Thermoanaerobacterales</taxon>
        <taxon>Thermoanaerobacteraceae</taxon>
        <taxon>Caldanaerobacter</taxon>
    </lineage>
</organism>
<sequence>MSKKTIVSMAVIRRLPRYHRCLEELLKNDIKRISSKELSERMGVTASQIRQDLNNFGGFGQQGYGYNVEELYNNLTKILGLDKTYNTIIIGAGNLGQAIANYTRFEKSGFNLKGIFDINPRLFGLKIRDVEVMDVEKVEEFIANNHIDIAILCIPKDNAQYTADRLVKAGIKAIWNFSPIDLKVPDDVILENVHLSDSLFTISYRLNEEELFKKLKGETVKVDG</sequence>
<reference key="1">
    <citation type="journal article" date="2002" name="Genome Res.">
        <title>A complete sequence of the T. tengcongensis genome.</title>
        <authorList>
            <person name="Bao Q."/>
            <person name="Tian Y."/>
            <person name="Li W."/>
            <person name="Xu Z."/>
            <person name="Xuan Z."/>
            <person name="Hu S."/>
            <person name="Dong W."/>
            <person name="Yang J."/>
            <person name="Chen Y."/>
            <person name="Xue Y."/>
            <person name="Xu Y."/>
            <person name="Lai X."/>
            <person name="Huang L."/>
            <person name="Dong X."/>
            <person name="Ma Y."/>
            <person name="Ling L."/>
            <person name="Tan H."/>
            <person name="Chen R."/>
            <person name="Wang J."/>
            <person name="Yu J."/>
            <person name="Yang H."/>
        </authorList>
    </citation>
    <scope>NUCLEOTIDE SEQUENCE [LARGE SCALE GENOMIC DNA]</scope>
    <source>
        <strain>DSM 15242 / JCM 11007 / NBRC 100824 / MB4</strain>
    </source>
</reference>
<feature type="chain" id="PRO_0000097928" description="Redox-sensing transcriptional repressor Rex">
    <location>
        <begin position="1"/>
        <end position="224"/>
    </location>
</feature>
<feature type="DNA-binding region" description="H-T-H motif" evidence="1">
    <location>
        <begin position="17"/>
        <end position="56"/>
    </location>
</feature>
<feature type="binding site" evidence="1">
    <location>
        <begin position="91"/>
        <end position="96"/>
    </location>
    <ligand>
        <name>NAD(+)</name>
        <dbReference type="ChEBI" id="CHEBI:57540"/>
    </ligand>
</feature>
<name>REX_CALS4</name>
<dbReference type="EMBL" id="AE008691">
    <property type="protein sequence ID" value="AAM23819.1"/>
    <property type="molecule type" value="Genomic_DNA"/>
</dbReference>
<dbReference type="RefSeq" id="WP_011024966.1">
    <property type="nucleotide sequence ID" value="NZ_JANUCV010000001.1"/>
</dbReference>
<dbReference type="SMR" id="Q8RC93"/>
<dbReference type="STRING" id="273068.TTE0543"/>
<dbReference type="KEGG" id="tte:TTE0543"/>
<dbReference type="eggNOG" id="COG2344">
    <property type="taxonomic scope" value="Bacteria"/>
</dbReference>
<dbReference type="HOGENOM" id="CLU_061534_1_0_9"/>
<dbReference type="OrthoDB" id="9784760at2"/>
<dbReference type="Proteomes" id="UP000000555">
    <property type="component" value="Chromosome"/>
</dbReference>
<dbReference type="GO" id="GO:0005737">
    <property type="term" value="C:cytoplasm"/>
    <property type="evidence" value="ECO:0007669"/>
    <property type="project" value="UniProtKB-SubCell"/>
</dbReference>
<dbReference type="GO" id="GO:0003677">
    <property type="term" value="F:DNA binding"/>
    <property type="evidence" value="ECO:0007669"/>
    <property type="project" value="UniProtKB-UniRule"/>
</dbReference>
<dbReference type="GO" id="GO:0003700">
    <property type="term" value="F:DNA-binding transcription factor activity"/>
    <property type="evidence" value="ECO:0007669"/>
    <property type="project" value="UniProtKB-UniRule"/>
</dbReference>
<dbReference type="GO" id="GO:0045892">
    <property type="term" value="P:negative regulation of DNA-templated transcription"/>
    <property type="evidence" value="ECO:0007669"/>
    <property type="project" value="InterPro"/>
</dbReference>
<dbReference type="GO" id="GO:0051775">
    <property type="term" value="P:response to redox state"/>
    <property type="evidence" value="ECO:0007669"/>
    <property type="project" value="InterPro"/>
</dbReference>
<dbReference type="Gene3D" id="3.40.50.720">
    <property type="entry name" value="NAD(P)-binding Rossmann-like Domain"/>
    <property type="match status" value="1"/>
</dbReference>
<dbReference type="Gene3D" id="1.10.10.10">
    <property type="entry name" value="Winged helix-like DNA-binding domain superfamily/Winged helix DNA-binding domain"/>
    <property type="match status" value="1"/>
</dbReference>
<dbReference type="HAMAP" id="MF_01131">
    <property type="entry name" value="Rex"/>
    <property type="match status" value="1"/>
</dbReference>
<dbReference type="InterPro" id="IPR003781">
    <property type="entry name" value="CoA-bd"/>
</dbReference>
<dbReference type="InterPro" id="IPR036291">
    <property type="entry name" value="NAD(P)-bd_dom_sf"/>
</dbReference>
<dbReference type="InterPro" id="IPR009718">
    <property type="entry name" value="Rex_DNA-bd_C_dom"/>
</dbReference>
<dbReference type="InterPro" id="IPR022876">
    <property type="entry name" value="Tscrpt_rep_Rex"/>
</dbReference>
<dbReference type="InterPro" id="IPR036388">
    <property type="entry name" value="WH-like_DNA-bd_sf"/>
</dbReference>
<dbReference type="InterPro" id="IPR036390">
    <property type="entry name" value="WH_DNA-bd_sf"/>
</dbReference>
<dbReference type="NCBIfam" id="NF003989">
    <property type="entry name" value="PRK05472.1-3"/>
    <property type="match status" value="1"/>
</dbReference>
<dbReference type="NCBIfam" id="NF003990">
    <property type="entry name" value="PRK05472.1-4"/>
    <property type="match status" value="1"/>
</dbReference>
<dbReference type="NCBIfam" id="NF003993">
    <property type="entry name" value="PRK05472.2-2"/>
    <property type="match status" value="1"/>
</dbReference>
<dbReference type="NCBIfam" id="NF003994">
    <property type="entry name" value="PRK05472.2-3"/>
    <property type="match status" value="1"/>
</dbReference>
<dbReference type="NCBIfam" id="NF003995">
    <property type="entry name" value="PRK05472.2-4"/>
    <property type="match status" value="1"/>
</dbReference>
<dbReference type="NCBIfam" id="NF003996">
    <property type="entry name" value="PRK05472.2-5"/>
    <property type="match status" value="1"/>
</dbReference>
<dbReference type="PANTHER" id="PTHR35786">
    <property type="entry name" value="REDOX-SENSING TRANSCRIPTIONAL REPRESSOR REX"/>
    <property type="match status" value="1"/>
</dbReference>
<dbReference type="PANTHER" id="PTHR35786:SF1">
    <property type="entry name" value="REDOX-SENSING TRANSCRIPTIONAL REPRESSOR REX 1"/>
    <property type="match status" value="1"/>
</dbReference>
<dbReference type="Pfam" id="PF02629">
    <property type="entry name" value="CoA_binding"/>
    <property type="match status" value="1"/>
</dbReference>
<dbReference type="Pfam" id="PF06971">
    <property type="entry name" value="Put_DNA-bind_N"/>
    <property type="match status" value="1"/>
</dbReference>
<dbReference type="SMART" id="SM00881">
    <property type="entry name" value="CoA_binding"/>
    <property type="match status" value="1"/>
</dbReference>
<dbReference type="SUPFAM" id="SSF51735">
    <property type="entry name" value="NAD(P)-binding Rossmann-fold domains"/>
    <property type="match status" value="1"/>
</dbReference>
<dbReference type="SUPFAM" id="SSF46785">
    <property type="entry name" value="Winged helix' DNA-binding domain"/>
    <property type="match status" value="1"/>
</dbReference>